<proteinExistence type="evidence at protein level"/>
<keyword id="KW-0067">ATP-binding</keyword>
<keyword id="KW-0347">Helicase</keyword>
<keyword id="KW-0378">Hydrolase</keyword>
<keyword id="KW-0413">Isomerase</keyword>
<keyword id="KW-0547">Nucleotide-binding</keyword>
<keyword id="KW-1185">Reference proteome</keyword>
<keyword id="KW-0677">Repeat</keyword>
<organism>
    <name type="scientific">Saccharomyces cerevisiae (strain ATCC 204508 / S288c)</name>
    <name type="common">Baker's yeast</name>
    <dbReference type="NCBI Taxonomy" id="559292"/>
    <lineage>
        <taxon>Eukaryota</taxon>
        <taxon>Fungi</taxon>
        <taxon>Dikarya</taxon>
        <taxon>Ascomycota</taxon>
        <taxon>Saccharomycotina</taxon>
        <taxon>Saccharomycetes</taxon>
        <taxon>Saccharomycetales</taxon>
        <taxon>Saccharomycetaceae</taxon>
        <taxon>Saccharomyces</taxon>
    </lineage>
</organism>
<evidence type="ECO:0000255" key="1">
    <source>
        <dbReference type="PROSITE-ProRule" id="PRU00541"/>
    </source>
</evidence>
<evidence type="ECO:0000255" key="2">
    <source>
        <dbReference type="PROSITE-ProRule" id="PRU00542"/>
    </source>
</evidence>
<evidence type="ECO:0000256" key="3">
    <source>
        <dbReference type="SAM" id="MobiDB-lite"/>
    </source>
</evidence>
<evidence type="ECO:0000269" key="4">
    <source>
    </source>
</evidence>
<evidence type="ECO:0000305" key="5"/>
<reference key="1">
    <citation type="journal article" date="1997" name="Nature">
        <title>The nucleotide sequence of Saccharomyces cerevisiae chromosome XII.</title>
        <authorList>
            <person name="Johnston M."/>
            <person name="Hillier L.W."/>
            <person name="Riles L."/>
            <person name="Albermann K."/>
            <person name="Andre B."/>
            <person name="Ansorge W."/>
            <person name="Benes V."/>
            <person name="Brueckner M."/>
            <person name="Delius H."/>
            <person name="Dubois E."/>
            <person name="Duesterhoeft A."/>
            <person name="Entian K.-D."/>
            <person name="Floeth M."/>
            <person name="Goffeau A."/>
            <person name="Hebling U."/>
            <person name="Heumann K."/>
            <person name="Heuss-Neitzel D."/>
            <person name="Hilbert H."/>
            <person name="Hilger F."/>
            <person name="Kleine K."/>
            <person name="Koetter P."/>
            <person name="Louis E.J."/>
            <person name="Messenguy F."/>
            <person name="Mewes H.-W."/>
            <person name="Miosga T."/>
            <person name="Moestl D."/>
            <person name="Mueller-Auer S."/>
            <person name="Nentwich U."/>
            <person name="Obermaier B."/>
            <person name="Piravandi E."/>
            <person name="Pohl T.M."/>
            <person name="Portetelle D."/>
            <person name="Purnelle B."/>
            <person name="Rechmann S."/>
            <person name="Rieger M."/>
            <person name="Rinke M."/>
            <person name="Rose M."/>
            <person name="Scharfe M."/>
            <person name="Scherens B."/>
            <person name="Scholler P."/>
            <person name="Schwager C."/>
            <person name="Schwarz S."/>
            <person name="Underwood A.P."/>
            <person name="Urrestarazu L.A."/>
            <person name="Vandenbol M."/>
            <person name="Verhasselt P."/>
            <person name="Vierendeels F."/>
            <person name="Voet M."/>
            <person name="Volckaert G."/>
            <person name="Voss H."/>
            <person name="Wambutt R."/>
            <person name="Wedler E."/>
            <person name="Wedler H."/>
            <person name="Zimmermann F.K."/>
            <person name="Zollner A."/>
            <person name="Hani J."/>
            <person name="Hoheisel J.D."/>
        </authorList>
    </citation>
    <scope>NUCLEOTIDE SEQUENCE [LARGE SCALE GENOMIC DNA]</scope>
    <source>
        <strain>ATCC 204508 / S288c</strain>
    </source>
</reference>
<reference key="2">
    <citation type="journal article" date="2014" name="G3 (Bethesda)">
        <title>The reference genome sequence of Saccharomyces cerevisiae: Then and now.</title>
        <authorList>
            <person name="Engel S.R."/>
            <person name="Dietrich F.S."/>
            <person name="Fisk D.G."/>
            <person name="Binkley G."/>
            <person name="Balakrishnan R."/>
            <person name="Costanzo M.C."/>
            <person name="Dwight S.S."/>
            <person name="Hitz B.C."/>
            <person name="Karra K."/>
            <person name="Nash R.S."/>
            <person name="Weng S."/>
            <person name="Wong E.D."/>
            <person name="Lloyd P."/>
            <person name="Skrzypek M.S."/>
            <person name="Miyasato S.R."/>
            <person name="Simison M."/>
            <person name="Cherry J.M."/>
        </authorList>
    </citation>
    <scope>GENOME REANNOTATION</scope>
    <source>
        <strain>ATCC 204508 / S288c</strain>
    </source>
</reference>
<reference key="3">
    <citation type="journal article" date="1998" name="J. Biol. Chem.">
        <title>Y'-Help1, a DNA helicase encoded by the yeast subtelomeric Y' element, is induced in survivors defective for telomerase.</title>
        <authorList>
            <person name="Yamada M."/>
            <person name="Hayatsu N."/>
            <person name="Matsuura A."/>
            <person name="Ishikawa F."/>
        </authorList>
    </citation>
    <scope>FUNCTION AS HELICASE</scope>
    <scope>INDUCTION</scope>
</reference>
<protein>
    <recommendedName>
        <fullName>Y' element ATP-dependent helicase protein 1 copy 5</fullName>
        <ecNumber evidence="4">5.6.2.-</ecNumber>
    </recommendedName>
</protein>
<sequence>MKVSDRRKFEKANFDEFESALNNKNDLVHCPSITLFESIPTEVRSFYEDEKSGLIKVVKFRTGAMDRKRSFEKIVISVMVGKNVQKFLTFVEDEPDFQGGPIPSKYLIPKKINLMVYTLFQVHTLKFNRKDYDTLSLFYLNRGYYNELSFRVLERCHEIASARPNDSSTMRTFTDFVSGAPIVRSLQKSTIRKYGYNLAPYMFLLLHVDELSIFSAYQASLPGEKKVDTERLKRDLCPRKPIEIKYFSQICNDMMNKKDRLGDILHIILRACALNFGAGPRGGAGDEEDRSITNEEPIIPSVDEHGLKVCKLRSPNTPRRLRKTLDAVKALLVSSCACTARDLDIFDDTNGVAMWKWIKILYHEVAQETTLKDSYRITLVPSSDGISVCGKLFNREYVRGFYFACKAQFDNLWGELNNCFYMPTVVDIASLILRNREVLFREPKRGIDEYLENDSFLQMIPVKYREIVLPKLRRDTNKMTAALKNKVTVAIDELTVPLMWMVHFAVGYPYRYPELQLLAFAGPQRNVYVDDTTRRIQLYTDYNKNGSSEPRLKTLDGLTSDYVFYFVTVLRQMQICALGNSYDAFNHDPWMDVVGFEDPDQVTNRDISRIVLYSYMFLNTAKGCLVEYATFRQYMRELPKNAPQKLNFREMRQGLIALGRHCVGSRFETDLYESATSELMANHSVQTGRNIYGVDSFSLTSVSGTTATLLQERASERWIQWLGLESDYHCSFSSTRNAEDVVAGEAASSDHDQKISRVTRKRPREPKSTNDILVAGQKLFGSSFEFRDLHQLRLCHEIYMADTPSVAVQAPPGYGKTELFHLPLIALASKGDVKYVSFLFVPYTVLLANCMIRLSRCGCLNVAPVRNFIEEGCDGVTDLYVGIYDDLASTNFTDRIAAWENIVECTFRTNNVKLGYLIVDEFHNFETEVYRQSQFGGITNLDFDAFEKAIFLSGTAPEAVADAALQRIGLTGLAKKSMDINELKRSEDLSRGLSSYPTRMFNLIKEKSEVPLGHVHKIWKKVESQPEEALKLLLALFEIEPESKAIVVASTTNEVEELACSWRKYFRVVWIHGKLGAAEKVSRTKEFVTDGSMRVLIGTKLVTEGIDIKQLMMVIMLDNRLNIIELIQGVGRLRDGGLCYLLSRKNSWAARNRKGELPPIKEGCITEQVREFYGLESKKGKKGQHVGCCGSRTDLSADTVELIERMDRLAEKQATASMSIIALPSSFQESNSSDRCRKYCSSDEDSDTCIHGSANASTNATTNSSTNATTTASTNVRTSATTTASINVRTSAITTESTNSSTNATTTASTNVRTSATTTASINVRTSATTTESTNSNTSATTTESTDSNTSATTTESTDSNTSATTTASTNSSTNATTTASTNSSTNATTTESTNASAKEDANKDGNAEDNRFHPVTDINKESYKRKGSQMVLLERKKLKAQFPNTSENMNVLQFLGFRSDEIKHLFLYGIDVYFCPEGVFTQYGLCKGCQKMFELCVCWAGQKVSYRRMAWEALAVERMLRNDEEYKEYLEDIEPYHGDPVGYLKYFSVKRGEIYSQIQRNYAWYLAITRRRETISVLDSTRGKQGSQVFRMSGRQIKELYYKVWSNLRESKTEVLQYFLNWDEKKCREEWEAKDDTVFVEALEKVGVFQRLRSMTSAGLQGPQYVKLQFSRHHRQLRSRYELSLGMHLRDQLALGVTPSKVPHWTAFLSMLIGLFYNKTFRQKLEYLLEQISEVWLLPHWLDLANVEVLAADNTRVPLYMLMVAVHKELDSDDVPDGRFDIILLCRDSSREVGE</sequence>
<gene>
    <name type="primary">YRF1-5</name>
    <name type="ordered locus">YLR467W</name>
    <name type="ORF">L9040</name>
</gene>
<dbReference type="EC" id="5.6.2.-" evidence="4"/>
<dbReference type="EMBL" id="Z73327">
    <property type="protein sequence ID" value="CAA97727.1"/>
    <property type="molecule type" value="Genomic_DNA"/>
</dbReference>
<dbReference type="EMBL" id="U22383">
    <property type="protein sequence ID" value="AAB64730.1"/>
    <property type="molecule type" value="Genomic_DNA"/>
</dbReference>
<dbReference type="EMBL" id="BK006945">
    <property type="protein sequence ID" value="DAA09765.1"/>
    <property type="molecule type" value="Genomic_DNA"/>
</dbReference>
<dbReference type="PIR" id="S65004">
    <property type="entry name" value="S65004"/>
</dbReference>
<dbReference type="RefSeq" id="NP_013572.3">
    <property type="nucleotide sequence ID" value="NM_001182355.3"/>
</dbReference>
<dbReference type="BioGRID" id="31723">
    <property type="interactions" value="19"/>
</dbReference>
<dbReference type="BioGRID" id="32590">
    <property type="interactions" value="32"/>
</dbReference>
<dbReference type="BioGRID" id="34775">
    <property type="interactions" value="4"/>
</dbReference>
<dbReference type="FunCoup" id="P0CX21">
    <property type="interactions" value="71"/>
</dbReference>
<dbReference type="EnsemblFungi" id="YDR545W_mRNA">
    <property type="protein sequence ID" value="YDR545W"/>
    <property type="gene ID" value="YDR545W"/>
</dbReference>
<dbReference type="EnsemblFungi" id="YLR467W_mRNA">
    <property type="protein sequence ID" value="YLR467W"/>
    <property type="gene ID" value="YLR467W"/>
</dbReference>
<dbReference type="EnsemblFungi" id="YOR396W_mRNA">
    <property type="protein sequence ID" value="YOR396W"/>
    <property type="gene ID" value="YOR396W"/>
</dbReference>
<dbReference type="GeneID" id="851189"/>
<dbReference type="KEGG" id="sce:YDR545W"/>
<dbReference type="KEGG" id="sce:YLR467W"/>
<dbReference type="KEGG" id="sce:YOR396W"/>
<dbReference type="AGR" id="SGD:S000004459"/>
<dbReference type="SGD" id="S000004459">
    <property type="gene designation" value="YRF1-5"/>
</dbReference>
<dbReference type="VEuPathDB" id="FungiDB:YDR545W"/>
<dbReference type="VEuPathDB" id="FungiDB:YLR467W"/>
<dbReference type="VEuPathDB" id="FungiDB:YOR396W"/>
<dbReference type="HOGENOM" id="CLU_003044_2_0_1"/>
<dbReference type="InParanoid" id="P0CX21"/>
<dbReference type="OrthoDB" id="4070089at2759"/>
<dbReference type="BioCyc" id="YEAST:G3O-32517-MONOMER"/>
<dbReference type="Reactome" id="R-SCE-5689880">
    <property type="pathway name" value="Ub-specific processing proteases"/>
</dbReference>
<dbReference type="PRO" id="PR:P0CX21"/>
<dbReference type="Proteomes" id="UP000002311">
    <property type="component" value="Chromosome XII"/>
</dbReference>
<dbReference type="RNAct" id="P0CX21">
    <property type="molecule type" value="protein"/>
</dbReference>
<dbReference type="ExpressionAtlas" id="P0CX21">
    <property type="expression patterns" value="baseline and differential"/>
</dbReference>
<dbReference type="GO" id="GO:0005737">
    <property type="term" value="C:cytoplasm"/>
    <property type="evidence" value="ECO:0000318"/>
    <property type="project" value="GO_Central"/>
</dbReference>
<dbReference type="GO" id="GO:0005634">
    <property type="term" value="C:nucleus"/>
    <property type="evidence" value="ECO:0000305"/>
    <property type="project" value="SGD"/>
</dbReference>
<dbReference type="GO" id="GO:0005524">
    <property type="term" value="F:ATP binding"/>
    <property type="evidence" value="ECO:0007669"/>
    <property type="project" value="UniProtKB-KW"/>
</dbReference>
<dbReference type="GO" id="GO:0016887">
    <property type="term" value="F:ATP hydrolysis activity"/>
    <property type="evidence" value="ECO:0007669"/>
    <property type="project" value="RHEA"/>
</dbReference>
<dbReference type="GO" id="GO:0003678">
    <property type="term" value="F:DNA helicase activity"/>
    <property type="evidence" value="ECO:0000250"/>
    <property type="project" value="SGD"/>
</dbReference>
<dbReference type="GO" id="GO:0003676">
    <property type="term" value="F:nucleic acid binding"/>
    <property type="evidence" value="ECO:0007669"/>
    <property type="project" value="InterPro"/>
</dbReference>
<dbReference type="GO" id="GO:0000722">
    <property type="term" value="P:telomere maintenance via recombination"/>
    <property type="evidence" value="ECO:0000316"/>
    <property type="project" value="SGD"/>
</dbReference>
<dbReference type="FunFam" id="3.40.50.300:FF:001914">
    <property type="entry name" value="YML133C-like protein"/>
    <property type="match status" value="1"/>
</dbReference>
<dbReference type="FunFam" id="3.40.50.300:FF:002410">
    <property type="entry name" value="YML133C-like protein"/>
    <property type="match status" value="1"/>
</dbReference>
<dbReference type="Gene3D" id="3.40.50.300">
    <property type="entry name" value="P-loop containing nucleotide triphosphate hydrolases"/>
    <property type="match status" value="1"/>
</dbReference>
<dbReference type="InterPro" id="IPR011545">
    <property type="entry name" value="DEAD/DEAH_box_helicase_dom"/>
</dbReference>
<dbReference type="InterPro" id="IPR014001">
    <property type="entry name" value="Helicase_ATP-bd"/>
</dbReference>
<dbReference type="InterPro" id="IPR001650">
    <property type="entry name" value="Helicase_C-like"/>
</dbReference>
<dbReference type="InterPro" id="IPR027417">
    <property type="entry name" value="P-loop_NTPase"/>
</dbReference>
<dbReference type="InterPro" id="IPR021646">
    <property type="entry name" value="Sir1_ORC-binding"/>
</dbReference>
<dbReference type="InterPro" id="IPR050978">
    <property type="entry name" value="Y'_ATP-dependent_helicase"/>
</dbReference>
<dbReference type="PANTHER" id="PTHR31583">
    <property type="match status" value="1"/>
</dbReference>
<dbReference type="PANTHER" id="PTHR31583:SF2">
    <property type="match status" value="1"/>
</dbReference>
<dbReference type="Pfam" id="PF00270">
    <property type="entry name" value="DEAD"/>
    <property type="match status" value="1"/>
</dbReference>
<dbReference type="Pfam" id="PF00271">
    <property type="entry name" value="Helicase_C"/>
    <property type="match status" value="1"/>
</dbReference>
<dbReference type="Pfam" id="PF11603">
    <property type="entry name" value="Sir1"/>
    <property type="match status" value="1"/>
</dbReference>
<dbReference type="SMART" id="SM00487">
    <property type="entry name" value="DEXDc"/>
    <property type="match status" value="1"/>
</dbReference>
<dbReference type="SMART" id="SM00490">
    <property type="entry name" value="HELICc"/>
    <property type="match status" value="1"/>
</dbReference>
<dbReference type="SUPFAM" id="SSF52540">
    <property type="entry name" value="P-loop containing nucleoside triphosphate hydrolases"/>
    <property type="match status" value="1"/>
</dbReference>
<dbReference type="PROSITE" id="PS51192">
    <property type="entry name" value="HELICASE_ATP_BIND_1"/>
    <property type="match status" value="1"/>
</dbReference>
<dbReference type="PROSITE" id="PS51194">
    <property type="entry name" value="HELICASE_CTER"/>
    <property type="match status" value="1"/>
</dbReference>
<accession>P0CX21</accession>
<accession>D6VTG2</accession>
<accession>O94087</accession>
<accession>P24088</accession>
<accession>P24089</accession>
<accession>Q53WX0</accession>
<accession>Q99313</accession>
<name>YRF15_YEAST</name>
<feature type="chain" id="PRO_0000409756" description="Y' element ATP-dependent helicase protein 1 copy 5">
    <location>
        <begin position="1"/>
        <end position="1796"/>
    </location>
</feature>
<feature type="domain" description="Helicase ATP-binding" evidence="1">
    <location>
        <begin position="797"/>
        <end position="974"/>
    </location>
</feature>
<feature type="domain" description="Helicase C-terminal" evidence="2">
    <location>
        <begin position="1031"/>
        <end position="1180"/>
    </location>
</feature>
<feature type="region of interest" description="Disordered" evidence="3">
    <location>
        <begin position="743"/>
        <end position="767"/>
    </location>
</feature>
<feature type="region of interest" description="Disordered" evidence="3">
    <location>
        <begin position="1254"/>
        <end position="1278"/>
    </location>
</feature>
<feature type="region of interest" description="Disordered" evidence="3">
    <location>
        <begin position="1294"/>
        <end position="1421"/>
    </location>
</feature>
<feature type="compositionally biased region" description="Low complexity" evidence="3">
    <location>
        <begin position="1294"/>
        <end position="1397"/>
    </location>
</feature>
<feature type="compositionally biased region" description="Basic and acidic residues" evidence="3">
    <location>
        <begin position="1398"/>
        <end position="1421"/>
    </location>
</feature>
<feature type="binding site" evidence="1">
    <location>
        <begin position="810"/>
        <end position="817"/>
    </location>
    <ligand>
        <name>ATP</name>
        <dbReference type="ChEBI" id="CHEBI:30616"/>
    </ligand>
</feature>
<comment type="function">
    <text evidence="4">Catalyzes DNA unwinding and is involved in telomerase-independent telomere maintenance.</text>
</comment>
<comment type="induction">
    <text evidence="4">Induced in absence of telomerase TLC1.</text>
</comment>
<comment type="miscellaneous">
    <text evidence="4">The protein tested in (PubMed:9837911) started on residue 800; there are 4 identical proteins in yeast.</text>
</comment>
<comment type="similarity">
    <text evidence="5">Belongs to the helicase family. Yeast subtelomeric Y' repeat subfamily.</text>
</comment>